<proteinExistence type="inferred from homology"/>
<reference key="1">
    <citation type="journal article" date="2007" name="Genome Biol.">
        <title>Characterization and modeling of the Haemophilus influenzae core and supragenomes based on the complete genomic sequences of Rd and 12 clinical nontypeable strains.</title>
        <authorList>
            <person name="Hogg J.S."/>
            <person name="Hu F.Z."/>
            <person name="Janto B."/>
            <person name="Boissy R."/>
            <person name="Hayes J."/>
            <person name="Keefe R."/>
            <person name="Post J.C."/>
            <person name="Ehrlich G.D."/>
        </authorList>
    </citation>
    <scope>NUCLEOTIDE SEQUENCE [LARGE SCALE GENOMIC DNA]</scope>
    <source>
        <strain>PittGG</strain>
    </source>
</reference>
<organism>
    <name type="scientific">Haemophilus influenzae (strain PittGG)</name>
    <dbReference type="NCBI Taxonomy" id="374931"/>
    <lineage>
        <taxon>Bacteria</taxon>
        <taxon>Pseudomonadati</taxon>
        <taxon>Pseudomonadota</taxon>
        <taxon>Gammaproteobacteria</taxon>
        <taxon>Pasteurellales</taxon>
        <taxon>Pasteurellaceae</taxon>
        <taxon>Haemophilus</taxon>
    </lineage>
</organism>
<dbReference type="EC" id="2.7.2.1" evidence="1"/>
<dbReference type="EMBL" id="CP000672">
    <property type="protein sequence ID" value="ABR00724.1"/>
    <property type="molecule type" value="Genomic_DNA"/>
</dbReference>
<dbReference type="SMR" id="A5UIW8"/>
<dbReference type="KEGG" id="hiq:CGSHiGG_09740"/>
<dbReference type="HOGENOM" id="CLU_020352_0_1_6"/>
<dbReference type="UniPathway" id="UPA00340">
    <property type="reaction ID" value="UER00458"/>
</dbReference>
<dbReference type="Proteomes" id="UP000001990">
    <property type="component" value="Chromosome"/>
</dbReference>
<dbReference type="GO" id="GO:0005829">
    <property type="term" value="C:cytosol"/>
    <property type="evidence" value="ECO:0007669"/>
    <property type="project" value="TreeGrafter"/>
</dbReference>
<dbReference type="GO" id="GO:0008776">
    <property type="term" value="F:acetate kinase activity"/>
    <property type="evidence" value="ECO:0007669"/>
    <property type="project" value="UniProtKB-UniRule"/>
</dbReference>
<dbReference type="GO" id="GO:0005524">
    <property type="term" value="F:ATP binding"/>
    <property type="evidence" value="ECO:0007669"/>
    <property type="project" value="UniProtKB-KW"/>
</dbReference>
<dbReference type="GO" id="GO:0000287">
    <property type="term" value="F:magnesium ion binding"/>
    <property type="evidence" value="ECO:0007669"/>
    <property type="project" value="UniProtKB-UniRule"/>
</dbReference>
<dbReference type="GO" id="GO:0006083">
    <property type="term" value="P:acetate metabolic process"/>
    <property type="evidence" value="ECO:0007669"/>
    <property type="project" value="TreeGrafter"/>
</dbReference>
<dbReference type="GO" id="GO:0006085">
    <property type="term" value="P:acetyl-CoA biosynthetic process"/>
    <property type="evidence" value="ECO:0007669"/>
    <property type="project" value="UniProtKB-UniRule"/>
</dbReference>
<dbReference type="CDD" id="cd24010">
    <property type="entry name" value="ASKHA_NBD_AcK_PK"/>
    <property type="match status" value="1"/>
</dbReference>
<dbReference type="FunFam" id="3.30.420.40:FF:000041">
    <property type="entry name" value="Acetate kinase"/>
    <property type="match status" value="1"/>
</dbReference>
<dbReference type="FunFam" id="3.30.420.40:FF:000042">
    <property type="entry name" value="Acetate kinase"/>
    <property type="match status" value="1"/>
</dbReference>
<dbReference type="Gene3D" id="3.30.420.40">
    <property type="match status" value="2"/>
</dbReference>
<dbReference type="HAMAP" id="MF_00020">
    <property type="entry name" value="Acetate_kinase"/>
    <property type="match status" value="1"/>
</dbReference>
<dbReference type="InterPro" id="IPR004372">
    <property type="entry name" value="Ac/propionate_kinase"/>
</dbReference>
<dbReference type="InterPro" id="IPR000890">
    <property type="entry name" value="Aliphatic_acid_kin_short-chain"/>
</dbReference>
<dbReference type="InterPro" id="IPR023865">
    <property type="entry name" value="Aliphatic_acid_kinase_CS"/>
</dbReference>
<dbReference type="InterPro" id="IPR043129">
    <property type="entry name" value="ATPase_NBD"/>
</dbReference>
<dbReference type="NCBIfam" id="TIGR00016">
    <property type="entry name" value="ackA"/>
    <property type="match status" value="1"/>
</dbReference>
<dbReference type="PANTHER" id="PTHR21060">
    <property type="entry name" value="ACETATE KINASE"/>
    <property type="match status" value="1"/>
</dbReference>
<dbReference type="PANTHER" id="PTHR21060:SF21">
    <property type="entry name" value="ACETATE KINASE"/>
    <property type="match status" value="1"/>
</dbReference>
<dbReference type="Pfam" id="PF00871">
    <property type="entry name" value="Acetate_kinase"/>
    <property type="match status" value="1"/>
</dbReference>
<dbReference type="PIRSF" id="PIRSF000722">
    <property type="entry name" value="Acetate_prop_kin"/>
    <property type="match status" value="1"/>
</dbReference>
<dbReference type="PRINTS" id="PR00471">
    <property type="entry name" value="ACETATEKNASE"/>
</dbReference>
<dbReference type="SUPFAM" id="SSF53067">
    <property type="entry name" value="Actin-like ATPase domain"/>
    <property type="match status" value="2"/>
</dbReference>
<dbReference type="PROSITE" id="PS01075">
    <property type="entry name" value="ACETATE_KINASE_1"/>
    <property type="match status" value="1"/>
</dbReference>
<dbReference type="PROSITE" id="PS01076">
    <property type="entry name" value="ACETATE_KINASE_2"/>
    <property type="match status" value="1"/>
</dbReference>
<keyword id="KW-0067">ATP-binding</keyword>
<keyword id="KW-0963">Cytoplasm</keyword>
<keyword id="KW-0418">Kinase</keyword>
<keyword id="KW-0460">Magnesium</keyword>
<keyword id="KW-0479">Metal-binding</keyword>
<keyword id="KW-0547">Nucleotide-binding</keyword>
<keyword id="KW-0808">Transferase</keyword>
<protein>
    <recommendedName>
        <fullName evidence="1">Acetate kinase</fullName>
        <ecNumber evidence="1">2.7.2.1</ecNumber>
    </recommendedName>
    <alternativeName>
        <fullName evidence="1">Acetokinase</fullName>
    </alternativeName>
</protein>
<evidence type="ECO:0000255" key="1">
    <source>
        <dbReference type="HAMAP-Rule" id="MF_00020"/>
    </source>
</evidence>
<name>ACKA_HAEIG</name>
<gene>
    <name evidence="1" type="primary">ackA</name>
    <name type="ordered locus">CGSHiGG_09740</name>
</gene>
<comment type="function">
    <text evidence="1">Catalyzes the formation of acetyl phosphate from acetate and ATP. Can also catalyze the reverse reaction.</text>
</comment>
<comment type="catalytic activity">
    <reaction evidence="1">
        <text>acetate + ATP = acetyl phosphate + ADP</text>
        <dbReference type="Rhea" id="RHEA:11352"/>
        <dbReference type="ChEBI" id="CHEBI:22191"/>
        <dbReference type="ChEBI" id="CHEBI:30089"/>
        <dbReference type="ChEBI" id="CHEBI:30616"/>
        <dbReference type="ChEBI" id="CHEBI:456216"/>
        <dbReference type="EC" id="2.7.2.1"/>
    </reaction>
</comment>
<comment type="cofactor">
    <cofactor evidence="1">
        <name>Mg(2+)</name>
        <dbReference type="ChEBI" id="CHEBI:18420"/>
    </cofactor>
    <cofactor evidence="1">
        <name>Mn(2+)</name>
        <dbReference type="ChEBI" id="CHEBI:29035"/>
    </cofactor>
    <text evidence="1">Mg(2+). Can also accept Mn(2+).</text>
</comment>
<comment type="pathway">
    <text evidence="1">Metabolic intermediate biosynthesis; acetyl-CoA biosynthesis; acetyl-CoA from acetate: step 1/2.</text>
</comment>
<comment type="subunit">
    <text evidence="1">Homodimer.</text>
</comment>
<comment type="subcellular location">
    <subcellularLocation>
        <location evidence="1">Cytoplasm</location>
    </subcellularLocation>
</comment>
<comment type="similarity">
    <text evidence="1">Belongs to the acetokinase family.</text>
</comment>
<accession>A5UIW8</accession>
<feature type="chain" id="PRO_1000002235" description="Acetate kinase">
    <location>
        <begin position="1"/>
        <end position="401"/>
    </location>
</feature>
<feature type="active site" description="Proton donor/acceptor" evidence="1">
    <location>
        <position position="147"/>
    </location>
</feature>
<feature type="binding site" evidence="1">
    <location>
        <position position="9"/>
    </location>
    <ligand>
        <name>Mg(2+)</name>
        <dbReference type="ChEBI" id="CHEBI:18420"/>
    </ligand>
</feature>
<feature type="binding site" evidence="1">
    <location>
        <position position="16"/>
    </location>
    <ligand>
        <name>ATP</name>
        <dbReference type="ChEBI" id="CHEBI:30616"/>
    </ligand>
</feature>
<feature type="binding site" evidence="1">
    <location>
        <position position="88"/>
    </location>
    <ligand>
        <name>substrate</name>
    </ligand>
</feature>
<feature type="binding site" evidence="1">
    <location>
        <begin position="207"/>
        <end position="211"/>
    </location>
    <ligand>
        <name>ATP</name>
        <dbReference type="ChEBI" id="CHEBI:30616"/>
    </ligand>
</feature>
<feature type="binding site" evidence="1">
    <location>
        <begin position="282"/>
        <end position="284"/>
    </location>
    <ligand>
        <name>ATP</name>
        <dbReference type="ChEBI" id="CHEBI:30616"/>
    </ligand>
</feature>
<feature type="binding site" evidence="1">
    <location>
        <begin position="333"/>
        <end position="337"/>
    </location>
    <ligand>
        <name>ATP</name>
        <dbReference type="ChEBI" id="CHEBI:30616"/>
    </ligand>
</feature>
<feature type="binding site" evidence="1">
    <location>
        <position position="388"/>
    </location>
    <ligand>
        <name>Mg(2+)</name>
        <dbReference type="ChEBI" id="CHEBI:18420"/>
    </ligand>
</feature>
<feature type="site" description="Transition state stabilizer" evidence="1">
    <location>
        <position position="179"/>
    </location>
</feature>
<feature type="site" description="Transition state stabilizer" evidence="1">
    <location>
        <position position="240"/>
    </location>
</feature>
<sequence>MSKLVLILNCGSSSLKFAILDPATGEEKLSGLAEAFFLPEARIKWKLNGEKGNADLGAGAAHTEALNFIASNILNDELKNSIAAIGHRIVHGGEKYTQSVIVTDEVVKGIEDAAQFAPLHNPAHLIGIREAFKAFPHLKDKNVVVFDTAFHQTMPEEAFLYALPYSLYKEHGVRRYGAHGTSHYFVSREVAEYVGKPADQVNAIICHLGNGGSVSVVRNGQCIDTSMGLTPLEGLVMGTRCGDIDPAIVFYLYKTLGMSMDQIEETLVKKSGLLGLTEVTSDCRYAEDNYDDESKPETKRALNVYSYRLAKYIGAYMAVLGDDHLDAIAFTGGIGENSAHVRELALNHLKLFGIKIDHERNLATRFGKDGVITTDDSAFKAIVLPTNEELVIAQDTAKLCF</sequence>